<dbReference type="EC" id="4.3.1.32"/>
<dbReference type="EC" id="2.5.1.147"/>
<dbReference type="EMBL" id="AF479769">
    <property type="protein sequence ID" value="AAL91922.1"/>
    <property type="molecule type" value="Genomic_DNA"/>
</dbReference>
<dbReference type="EMBL" id="LT708304">
    <property type="protein sequence ID" value="SIT99807.1"/>
    <property type="molecule type" value="Genomic_DNA"/>
</dbReference>
<dbReference type="RefSeq" id="NP_854860.1">
    <property type="nucleotide sequence ID" value="NC_002945.3"/>
</dbReference>
<dbReference type="RefSeq" id="WP_003406167.1">
    <property type="nucleotide sequence ID" value="NC_002945.4"/>
</dbReference>
<dbReference type="SMR" id="Q7U0G9"/>
<dbReference type="KEGG" id="mbo:BQ2027_MB1206"/>
<dbReference type="PATRIC" id="fig|233413.5.peg.1325"/>
<dbReference type="BioCyc" id="MetaCyc:MONOMER-12180"/>
<dbReference type="BRENDA" id="2.5.1.147">
    <property type="organism ID" value="3494"/>
</dbReference>
<dbReference type="BRENDA" id="4.3.1.32">
    <property type="organism ID" value="3494"/>
</dbReference>
<dbReference type="UniPathway" id="UPA00072"/>
<dbReference type="Proteomes" id="UP000001419">
    <property type="component" value="Chromosome"/>
</dbReference>
<dbReference type="GO" id="GO:0051539">
    <property type="term" value="F:4 iron, 4 sulfur cluster binding"/>
    <property type="evidence" value="ECO:0007669"/>
    <property type="project" value="UniProtKB-KW"/>
</dbReference>
<dbReference type="GO" id="GO:0141093">
    <property type="term" value="F:5-amino-6-(D-ribitylamino)uracil--L-tyrosine 4-hydroxyphenyl transferase activity"/>
    <property type="evidence" value="ECO:0007669"/>
    <property type="project" value="UniProtKB-EC"/>
</dbReference>
<dbReference type="GO" id="GO:0044689">
    <property type="term" value="F:7,8-didemethyl-8-hydroxy-5-deazariboflavin synthase activity"/>
    <property type="evidence" value="ECO:0007669"/>
    <property type="project" value="UniProtKB-EC"/>
</dbReference>
<dbReference type="GO" id="GO:0046872">
    <property type="term" value="F:metal ion binding"/>
    <property type="evidence" value="ECO:0007669"/>
    <property type="project" value="UniProtKB-KW"/>
</dbReference>
<dbReference type="CDD" id="cd01335">
    <property type="entry name" value="Radical_SAM"/>
    <property type="match status" value="2"/>
</dbReference>
<dbReference type="FunFam" id="3.20.20.70:FF:000134">
    <property type="entry name" value="7,8-didemethyl-8-hydroxy-5-deazariboflavin synthase"/>
    <property type="match status" value="1"/>
</dbReference>
<dbReference type="Gene3D" id="3.20.20.70">
    <property type="entry name" value="Aldolase class I"/>
    <property type="match status" value="2"/>
</dbReference>
<dbReference type="HAMAP" id="MF_01611">
    <property type="entry name" value="FO_synth_sub1"/>
    <property type="match status" value="1"/>
</dbReference>
<dbReference type="HAMAP" id="MF_01612">
    <property type="entry name" value="FO_synth_sub2"/>
    <property type="match status" value="1"/>
</dbReference>
<dbReference type="InterPro" id="IPR013785">
    <property type="entry name" value="Aldolase_TIM"/>
</dbReference>
<dbReference type="InterPro" id="IPR019939">
    <property type="entry name" value="CofG_family"/>
</dbReference>
<dbReference type="InterPro" id="IPR045567">
    <property type="entry name" value="CofH/MnqC-like_C"/>
</dbReference>
<dbReference type="InterPro" id="IPR019940">
    <property type="entry name" value="CofH_family"/>
</dbReference>
<dbReference type="InterPro" id="IPR006638">
    <property type="entry name" value="Elp3/MiaA/NifB-like_rSAM"/>
</dbReference>
<dbReference type="InterPro" id="IPR034405">
    <property type="entry name" value="F420"/>
</dbReference>
<dbReference type="InterPro" id="IPR020050">
    <property type="entry name" value="FO_synthase_su2"/>
</dbReference>
<dbReference type="InterPro" id="IPR007197">
    <property type="entry name" value="rSAM"/>
</dbReference>
<dbReference type="NCBIfam" id="TIGR00423">
    <property type="entry name" value="CofH family radical SAM protein"/>
    <property type="match status" value="1"/>
</dbReference>
<dbReference type="NCBIfam" id="TIGR03550">
    <property type="entry name" value="F420_cofG"/>
    <property type="match status" value="1"/>
</dbReference>
<dbReference type="NCBIfam" id="TIGR03551">
    <property type="entry name" value="F420_cofH"/>
    <property type="match status" value="1"/>
</dbReference>
<dbReference type="NCBIfam" id="NF004884">
    <property type="entry name" value="PRK06245.1"/>
    <property type="match status" value="1"/>
</dbReference>
<dbReference type="NCBIfam" id="NF005609">
    <property type="entry name" value="PRK07360.1"/>
    <property type="match status" value="1"/>
</dbReference>
<dbReference type="NCBIfam" id="NF006687">
    <property type="entry name" value="PRK09234.1"/>
    <property type="match status" value="1"/>
</dbReference>
<dbReference type="PANTHER" id="PTHR43076">
    <property type="entry name" value="FO SYNTHASE (COFH)"/>
    <property type="match status" value="1"/>
</dbReference>
<dbReference type="PANTHER" id="PTHR43076:SF1">
    <property type="entry name" value="LIPOYL SYNTHASE 2"/>
    <property type="match status" value="1"/>
</dbReference>
<dbReference type="Pfam" id="PF19288">
    <property type="entry name" value="CofH_C"/>
    <property type="match status" value="1"/>
</dbReference>
<dbReference type="Pfam" id="PF04055">
    <property type="entry name" value="Radical_SAM"/>
    <property type="match status" value="2"/>
</dbReference>
<dbReference type="SFLD" id="SFLDF00293">
    <property type="entry name" value="((2_3_4_5-tetrahydroxypentyl)a"/>
    <property type="match status" value="1"/>
</dbReference>
<dbReference type="SFLD" id="SFLDF00294">
    <property type="entry name" value="7_8-didemethyl-8-hydroxy-5-dea"/>
    <property type="match status" value="1"/>
</dbReference>
<dbReference type="SFLD" id="SFLDG01388">
    <property type="entry name" value="7_8-didemethyl-8-hydroxy-5-dea"/>
    <property type="match status" value="1"/>
</dbReference>
<dbReference type="SFLD" id="SFLDF00343">
    <property type="entry name" value="aminofutalosine_synthase_(mqnE"/>
    <property type="match status" value="1"/>
</dbReference>
<dbReference type="SFLD" id="SFLDG01064">
    <property type="entry name" value="F420__menaquinone_cofactor_bio"/>
    <property type="match status" value="1"/>
</dbReference>
<dbReference type="SFLD" id="SFLDS00029">
    <property type="entry name" value="Radical_SAM"/>
    <property type="match status" value="1"/>
</dbReference>
<dbReference type="SMART" id="SM00729">
    <property type="entry name" value="Elp3"/>
    <property type="match status" value="1"/>
</dbReference>
<dbReference type="SUPFAM" id="SSF102114">
    <property type="entry name" value="Radical SAM enzymes"/>
    <property type="match status" value="2"/>
</dbReference>
<dbReference type="PROSITE" id="PS51918">
    <property type="entry name" value="RADICAL_SAM"/>
    <property type="match status" value="2"/>
</dbReference>
<reference key="1">
    <citation type="journal article" date="2002" name="J. Bacteriol.">
        <title>Demonstration that fbiC is required by Mycobacterium bovis BCG for coenzyme F(420) and FO biosynthesis.</title>
        <authorList>
            <person name="Choi K.-P."/>
            <person name="Kendrick N."/>
            <person name="Daniels L."/>
        </authorList>
    </citation>
    <scope>NUCLEOTIDE SEQUENCE [GENOMIC DNA]</scope>
    <scope>ROLE IN COENZYME F420 AND FO BIOSYNTHESIS</scope>
    <source>
        <strain>BCG</strain>
    </source>
</reference>
<reference key="2">
    <citation type="journal article" date="2003" name="Proc. Natl. Acad. Sci. U.S.A.">
        <title>The complete genome sequence of Mycobacterium bovis.</title>
        <authorList>
            <person name="Garnier T."/>
            <person name="Eiglmeier K."/>
            <person name="Camus J.-C."/>
            <person name="Medina N."/>
            <person name="Mansoor H."/>
            <person name="Pryor M."/>
            <person name="Duthoy S."/>
            <person name="Grondin S."/>
            <person name="Lacroix C."/>
            <person name="Monsempe C."/>
            <person name="Simon S."/>
            <person name="Harris B."/>
            <person name="Atkin R."/>
            <person name="Doggett J."/>
            <person name="Mayes R."/>
            <person name="Keating L."/>
            <person name="Wheeler P.R."/>
            <person name="Parkhill J."/>
            <person name="Barrell B.G."/>
            <person name="Cole S.T."/>
            <person name="Gordon S.V."/>
            <person name="Hewinson R.G."/>
        </authorList>
    </citation>
    <scope>NUCLEOTIDE SEQUENCE [LARGE SCALE GENOMIC DNA]</scope>
    <source>
        <strain>ATCC BAA-935 / AF2122/97</strain>
    </source>
</reference>
<reference key="3">
    <citation type="journal article" date="2017" name="Genome Announc.">
        <title>Updated reference genome sequence and annotation of Mycobacterium bovis AF2122/97.</title>
        <authorList>
            <person name="Malone K.M."/>
            <person name="Farrell D."/>
            <person name="Stuber T.P."/>
            <person name="Schubert O.T."/>
            <person name="Aebersold R."/>
            <person name="Robbe-Austerman S."/>
            <person name="Gordon S.V."/>
        </authorList>
    </citation>
    <scope>NUCLEOTIDE SEQUENCE [LARGE SCALE GENOMIC DNA]</scope>
    <scope>GENOME REANNOTATION</scope>
    <source>
        <strain>ATCC BAA-935 / AF2122/97</strain>
    </source>
</reference>
<proteinExistence type="inferred from homology"/>
<feature type="chain" id="PRO_0000147769" description="FO synthase">
    <location>
        <begin position="1"/>
        <end position="856"/>
    </location>
</feature>
<feature type="domain" description="Radical SAM core 1" evidence="2">
    <location>
        <begin position="84"/>
        <end position="336"/>
    </location>
</feature>
<feature type="domain" description="Radical SAM core 2" evidence="2">
    <location>
        <begin position="544"/>
        <end position="785"/>
    </location>
</feature>
<feature type="region of interest" description="CofG-like">
    <location>
        <begin position="85"/>
        <end position="417"/>
    </location>
</feature>
<feature type="region of interest" description="CofH-like">
    <location>
        <begin position="521"/>
        <end position="854"/>
    </location>
</feature>
<feature type="binding site" evidence="1">
    <location>
        <position position="98"/>
    </location>
    <ligand>
        <name>[4Fe-4S] cluster</name>
        <dbReference type="ChEBI" id="CHEBI:49883"/>
        <label>1</label>
        <note>4Fe-4S-S-AdoMet</note>
    </ligand>
</feature>
<feature type="binding site" evidence="1">
    <location>
        <position position="102"/>
    </location>
    <ligand>
        <name>[4Fe-4S] cluster</name>
        <dbReference type="ChEBI" id="CHEBI:49883"/>
        <label>1</label>
        <note>4Fe-4S-S-AdoMet</note>
    </ligand>
</feature>
<feature type="binding site" evidence="1">
    <location>
        <position position="105"/>
    </location>
    <ligand>
        <name>[4Fe-4S] cluster</name>
        <dbReference type="ChEBI" id="CHEBI:49883"/>
        <label>1</label>
        <note>4Fe-4S-S-AdoMet</note>
    </ligand>
</feature>
<feature type="binding site" evidence="1">
    <location>
        <position position="558"/>
    </location>
    <ligand>
        <name>[4Fe-4S] cluster</name>
        <dbReference type="ChEBI" id="CHEBI:49883"/>
        <label>2</label>
        <note>4Fe-4S-S-AdoMet</note>
    </ligand>
</feature>
<feature type="binding site" evidence="1">
    <location>
        <position position="562"/>
    </location>
    <ligand>
        <name>[4Fe-4S] cluster</name>
        <dbReference type="ChEBI" id="CHEBI:49883"/>
        <label>2</label>
        <note>4Fe-4S-S-AdoMet</note>
    </ligand>
</feature>
<feature type="binding site" evidence="1">
    <location>
        <position position="565"/>
    </location>
    <ligand>
        <name>[4Fe-4S] cluster</name>
        <dbReference type="ChEBI" id="CHEBI:49883"/>
        <label>2</label>
        <note>4Fe-4S-S-AdoMet</note>
    </ligand>
</feature>
<gene>
    <name type="primary">fbiC</name>
    <name type="ordered locus">BQ2027_MB1206</name>
</gene>
<sequence>MPQPVGRKSTALPSPVVPPQANASALRRVLRRARDGVTLNVDEAAIAMTARGDELADLCASAARVRDAGLVSAGRHGPSGRLAISYSRKVFIPVTRLCRDNCHYCTFVTVPGKLRAQGSSTYMEPDEILDVARRGAEFGCKEALFTLGDRPEARWRQAREWLGERGYDSTLSYVRAMAIRVLEQTGLLPHLNPGVMSWSEMSRLKPVAPSMGMMLETTSRRLFETKGLAHYGSPDKDPAVRLRVLTDAGRLSIPFTTGLLVGIGETLSERADTLHAIRKSHKEFGHIQEVIVQNFRAKEHTAMAAFPDAGIEDYLATVAVARLVLGPGMRIQAPPNLVSGDECRALVGAGVDDWGGVSPLTPDHVNPERPWPALDELAAVTAEAGYDMVQRLTAQPKYVQAGAAWIDPRVRGHVVALADPATGLARDVNPVGMPWQEPDDVASWGRVDLGAAIDTQGRNTAVRSDLASAFGDWESIREQVHELAVRAPERIDTDVLAALRSAERAPAGCTDGEYLALATADGPALEAVAALADSLRRDVVGDEVTFVVNRNINFTNICYTGCRFCAFAQRKGDADAYSLSVGEVADRAWEAHVAGATEVCMQGGIDPELPVTGYADLVRAVKARVPSMHVHAFSPMEIANGVTKSGLSIREWLIGLREAGLDTIPGTAAEILDDEVRWVLTKGKLPTSLWIEIVTTAHEVGLRSSSTMMYGHVDSPRHWVAHLNVLRDIQDRTGGFTEFVPLPFVHQNSPLYLAGAARPGPSHRDNRAVHALARIMLHGRISHIQTSWVKLGVRRTQVMLEGGANDLGGTLMEETISRMAGSEHGSAKTVAELVAIAEGIGRPARQRTTTYALLAA</sequence>
<comment type="function">
    <text evidence="4">Catalyzes the radical-mediated synthesis of 7,8-didemethyl-8-hydroxy-5-deazariboflavin (FO) from 5-amino-6-(D-ribitylamino)uracil and L-tyrosine.</text>
</comment>
<comment type="catalytic activity">
    <reaction>
        <text>5-amino-6-(D-ribitylamino)uracil + L-tyrosine + S-adenosyl-L-methionine = 5-amino-5-(4-hydroxybenzyl)-6-(D-ribitylimino)-5,6-dihydrouracil + 2-iminoacetate + 5'-deoxyadenosine + L-methionine + H(+)</text>
        <dbReference type="Rhea" id="RHEA:55200"/>
        <dbReference type="ChEBI" id="CHEBI:15378"/>
        <dbReference type="ChEBI" id="CHEBI:15934"/>
        <dbReference type="ChEBI" id="CHEBI:17319"/>
        <dbReference type="ChEBI" id="CHEBI:57844"/>
        <dbReference type="ChEBI" id="CHEBI:58315"/>
        <dbReference type="ChEBI" id="CHEBI:59789"/>
        <dbReference type="ChEBI" id="CHEBI:77846"/>
        <dbReference type="ChEBI" id="CHEBI:85936"/>
        <dbReference type="EC" id="2.5.1.147"/>
    </reaction>
</comment>
<comment type="catalytic activity">
    <reaction>
        <text>5-amino-5-(4-hydroxybenzyl)-6-(D-ribitylimino)-5,6-dihydrouracil + S-adenosyl-L-methionine = 7,8-didemethyl-8-hydroxy-5-deazariboflavin + 5'-deoxyadenosine + L-methionine + NH4(+) + H(+)</text>
        <dbReference type="Rhea" id="RHEA:55204"/>
        <dbReference type="ChEBI" id="CHEBI:15378"/>
        <dbReference type="ChEBI" id="CHEBI:17319"/>
        <dbReference type="ChEBI" id="CHEBI:28938"/>
        <dbReference type="ChEBI" id="CHEBI:57844"/>
        <dbReference type="ChEBI" id="CHEBI:59789"/>
        <dbReference type="ChEBI" id="CHEBI:59904"/>
        <dbReference type="ChEBI" id="CHEBI:85936"/>
        <dbReference type="EC" id="4.3.1.32"/>
    </reaction>
</comment>
<comment type="cofactor">
    <cofactor evidence="1">
        <name>[4Fe-4S] cluster</name>
        <dbReference type="ChEBI" id="CHEBI:49883"/>
    </cofactor>
    <text evidence="1">Binds 2 [4Fe-4S] clusters. The clusters are coordinated with 3 cysteines and an exchangeable S-adenosyl-L-methionine.</text>
</comment>
<comment type="pathway">
    <text>Cofactor biosynthesis; coenzyme F0 biosynthesis.</text>
</comment>
<comment type="similarity">
    <text evidence="3">In the N-terminal section; belongs to the radical SAM superfamily. CofG family.</text>
</comment>
<comment type="similarity">
    <text evidence="3">In the C-terminal section; belongs to the radical SAM superfamily. CofH family.</text>
</comment>
<organism>
    <name type="scientific">Mycobacterium bovis (strain ATCC BAA-935 / AF2122/97)</name>
    <dbReference type="NCBI Taxonomy" id="233413"/>
    <lineage>
        <taxon>Bacteria</taxon>
        <taxon>Bacillati</taxon>
        <taxon>Actinomycetota</taxon>
        <taxon>Actinomycetes</taxon>
        <taxon>Mycobacteriales</taxon>
        <taxon>Mycobacteriaceae</taxon>
        <taxon>Mycobacterium</taxon>
        <taxon>Mycobacterium tuberculosis complex</taxon>
    </lineage>
</organism>
<keyword id="KW-0004">4Fe-4S</keyword>
<keyword id="KW-0408">Iron</keyword>
<keyword id="KW-0411">Iron-sulfur</keyword>
<keyword id="KW-0456">Lyase</keyword>
<keyword id="KW-0479">Metal-binding</keyword>
<keyword id="KW-1185">Reference proteome</keyword>
<keyword id="KW-0949">S-adenosyl-L-methionine</keyword>
<keyword id="KW-0808">Transferase</keyword>
<evidence type="ECO:0000250" key="1"/>
<evidence type="ECO:0000255" key="2">
    <source>
        <dbReference type="PROSITE-ProRule" id="PRU01266"/>
    </source>
</evidence>
<evidence type="ECO:0000305" key="3"/>
<evidence type="ECO:0000305" key="4">
    <source>
    </source>
</evidence>
<name>FBIC_MYCBO</name>
<accession>Q7U0G9</accession>
<accession>A0A1R3XXK4</accession>
<accession>Q7B8A4</accession>
<accession>X2BH81</accession>
<protein>
    <recommendedName>
        <fullName>FO synthase</fullName>
    </recommendedName>
    <domain>
        <recommendedName>
            <fullName>7,8-didemethyl-8-hydroxy-5-deazariboflavin synthase</fullName>
            <ecNumber>4.3.1.32</ecNumber>
        </recommendedName>
    </domain>
    <domain>
        <recommendedName>
            <fullName>5-amino-6-(D-ribitylamino)uracil--L-tyrosine 4-hydroxyphenyl transferase</fullName>
            <ecNumber>2.5.1.147</ecNumber>
        </recommendedName>
    </domain>
</protein>